<protein>
    <recommendedName>
        <fullName evidence="2">Translation initiation factor IF-2</fullName>
    </recommendedName>
</protein>
<feature type="chain" id="PRO_1000093793" description="Translation initiation factor IF-2">
    <location>
        <begin position="1"/>
        <end position="948"/>
    </location>
</feature>
<feature type="domain" description="tr-type G">
    <location>
        <begin position="447"/>
        <end position="616"/>
    </location>
</feature>
<feature type="region of interest" description="Disordered" evidence="3">
    <location>
        <begin position="61"/>
        <end position="120"/>
    </location>
</feature>
<feature type="region of interest" description="Disordered" evidence="3">
    <location>
        <begin position="162"/>
        <end position="243"/>
    </location>
</feature>
<feature type="region of interest" description="Disordered" evidence="3">
    <location>
        <begin position="255"/>
        <end position="285"/>
    </location>
</feature>
<feature type="region of interest" description="G1" evidence="1">
    <location>
        <begin position="456"/>
        <end position="463"/>
    </location>
</feature>
<feature type="region of interest" description="G2" evidence="1">
    <location>
        <begin position="481"/>
        <end position="485"/>
    </location>
</feature>
<feature type="region of interest" description="G3" evidence="1">
    <location>
        <begin position="502"/>
        <end position="505"/>
    </location>
</feature>
<feature type="region of interest" description="G4" evidence="1">
    <location>
        <begin position="556"/>
        <end position="559"/>
    </location>
</feature>
<feature type="region of interest" description="G5" evidence="1">
    <location>
        <begin position="592"/>
        <end position="594"/>
    </location>
</feature>
<feature type="compositionally biased region" description="Basic and acidic residues" evidence="3">
    <location>
        <begin position="68"/>
        <end position="78"/>
    </location>
</feature>
<feature type="compositionally biased region" description="Low complexity" evidence="3">
    <location>
        <begin position="173"/>
        <end position="189"/>
    </location>
</feature>
<feature type="compositionally biased region" description="Basic and acidic residues" evidence="3">
    <location>
        <begin position="190"/>
        <end position="207"/>
    </location>
</feature>
<feature type="compositionally biased region" description="Basic residues" evidence="3">
    <location>
        <begin position="208"/>
        <end position="219"/>
    </location>
</feature>
<feature type="compositionally biased region" description="Polar residues" evidence="3">
    <location>
        <begin position="230"/>
        <end position="243"/>
    </location>
</feature>
<feature type="binding site" evidence="2">
    <location>
        <begin position="456"/>
        <end position="463"/>
    </location>
    <ligand>
        <name>GTP</name>
        <dbReference type="ChEBI" id="CHEBI:37565"/>
    </ligand>
</feature>
<feature type="binding site" evidence="2">
    <location>
        <begin position="502"/>
        <end position="506"/>
    </location>
    <ligand>
        <name>GTP</name>
        <dbReference type="ChEBI" id="CHEBI:37565"/>
    </ligand>
</feature>
<feature type="binding site" evidence="2">
    <location>
        <begin position="556"/>
        <end position="559"/>
    </location>
    <ligand>
        <name>GTP</name>
        <dbReference type="ChEBI" id="CHEBI:37565"/>
    </ligand>
</feature>
<sequence>MSEMVDLKKFLTELGKTQKELKNVIEQAKDIGLELKTNSKMTPEQAGKLYKYIVDGIKEQIQANKPTKNPEQDNKDDLNITATPKPLNKKVSKTPKKEETKSQPKPKKTKEKKKEAPALIAKKKGGIEIVNTFEDQTLENTPKVVSHSQIEKAKQKLQEIQKSREALSKLTQSNTNNANSTNNANNVNNAKKEISEVKKQEQEIKRHENIKRRTGFRVIKRNDETENETENSVAESKKPTQSAAAIFEDIKKEWQEKDKQEAKKAKKPSKPKATPTAKNNKSHKIDFSDARDFKGNDIYDDETDEILLFDLHEQDNLNKEEEEKEIRQNINDRVRVQRKNPWMNESGIKRQSKKKRAFRNDNSQKVIQSAISIPEEVRVYEFAQKANLNLADVIKTLFNLGLMVTKNDFLDKDSIEILAEEFHLEISVQNTLEEFEVEEVLEGVKKERPPVVTIMGHVDHGKTSLLDKIRDKRVAHTEAGGITQHIGAYMVEKNDKWVSFIDTPGHEAFSQMRNRGAQVTDIAVIVIAADDGVKQQTIEALEHAKAANVPVIFAMNKMDKPNVNPDKLKAECAELGYNPVDWGGEYEFIPVSAKTGDGIDNLLETILIQADIMELKAIEEGSARAVVLEGSVEKGRGAVATVIVQSGTLSVGDSFFAETAFGKVRTMTDDQGKSIQSLKPSMVALITGLSEVPPAGSVLIGVENDSIARLQAQKRATYLRQKALSKSTKVSFDELSEMVANKELKNIPVVIKADTQGSLEAIKNSLLELNNEEVAIQVIHSGVGGITENDLSLVSSSEHAVILGFNIRPTGNVKNKAKEYNVSIKTYTVIYALIEEMRSLLLGLMSPIIEEEHTGQAEVRETFNIPKVGTIAGCVVSDGVIARGIKARLIRDGVVIHTGEILSLKRFKDDVKEVSKGYECGIMLDNYNEIKVGDVFETYKEIHKKRTL</sequence>
<accession>B2USN4</accession>
<name>IF2_HELPS</name>
<keyword id="KW-0963">Cytoplasm</keyword>
<keyword id="KW-0342">GTP-binding</keyword>
<keyword id="KW-0396">Initiation factor</keyword>
<keyword id="KW-0547">Nucleotide-binding</keyword>
<keyword id="KW-0648">Protein biosynthesis</keyword>
<evidence type="ECO:0000250" key="1"/>
<evidence type="ECO:0000255" key="2">
    <source>
        <dbReference type="HAMAP-Rule" id="MF_00100"/>
    </source>
</evidence>
<evidence type="ECO:0000256" key="3">
    <source>
        <dbReference type="SAM" id="MobiDB-lite"/>
    </source>
</evidence>
<reference key="1">
    <citation type="submission" date="2008-05" db="EMBL/GenBank/DDBJ databases">
        <title>Genome sequence of Helicobacter pylori from the remote Amazon: traces of Asian ancestry of the first Americans.</title>
        <authorList>
            <person name="Kersulyte D."/>
            <person name="Kalia A."/>
            <person name="Gilman R.H."/>
            <person name="Berg D.E."/>
        </authorList>
    </citation>
    <scope>NUCLEOTIDE SEQUENCE [LARGE SCALE GENOMIC DNA]</scope>
    <source>
        <strain>Shi470</strain>
    </source>
</reference>
<comment type="function">
    <text evidence="2">One of the essential components for the initiation of protein synthesis. Protects formylmethionyl-tRNA from spontaneous hydrolysis and promotes its binding to the 30S ribosomal subunits. Also involved in the hydrolysis of GTP during the formation of the 70S ribosomal complex.</text>
</comment>
<comment type="subcellular location">
    <subcellularLocation>
        <location evidence="2">Cytoplasm</location>
    </subcellularLocation>
</comment>
<comment type="similarity">
    <text evidence="2">Belongs to the TRAFAC class translation factor GTPase superfamily. Classic translation factor GTPase family. IF-2 subfamily.</text>
</comment>
<proteinExistence type="inferred from homology"/>
<organism>
    <name type="scientific">Helicobacter pylori (strain Shi470)</name>
    <dbReference type="NCBI Taxonomy" id="512562"/>
    <lineage>
        <taxon>Bacteria</taxon>
        <taxon>Pseudomonadati</taxon>
        <taxon>Campylobacterota</taxon>
        <taxon>Epsilonproteobacteria</taxon>
        <taxon>Campylobacterales</taxon>
        <taxon>Helicobacteraceae</taxon>
        <taxon>Helicobacter</taxon>
    </lineage>
</organism>
<dbReference type="EMBL" id="CP001072">
    <property type="protein sequence ID" value="ACD47866.1"/>
    <property type="molecule type" value="Genomic_DNA"/>
</dbReference>
<dbReference type="RefSeq" id="WP_001293395.1">
    <property type="nucleotide sequence ID" value="NC_010698.2"/>
</dbReference>
<dbReference type="SMR" id="B2USN4"/>
<dbReference type="KEGG" id="hps:HPSH_02080"/>
<dbReference type="HOGENOM" id="CLU_006301_4_0_7"/>
<dbReference type="GO" id="GO:0005829">
    <property type="term" value="C:cytosol"/>
    <property type="evidence" value="ECO:0007669"/>
    <property type="project" value="TreeGrafter"/>
</dbReference>
<dbReference type="GO" id="GO:0005525">
    <property type="term" value="F:GTP binding"/>
    <property type="evidence" value="ECO:0007669"/>
    <property type="project" value="UniProtKB-KW"/>
</dbReference>
<dbReference type="GO" id="GO:0003924">
    <property type="term" value="F:GTPase activity"/>
    <property type="evidence" value="ECO:0007669"/>
    <property type="project" value="UniProtKB-UniRule"/>
</dbReference>
<dbReference type="GO" id="GO:0003743">
    <property type="term" value="F:translation initiation factor activity"/>
    <property type="evidence" value="ECO:0007669"/>
    <property type="project" value="UniProtKB-UniRule"/>
</dbReference>
<dbReference type="CDD" id="cd01887">
    <property type="entry name" value="IF2_eIF5B"/>
    <property type="match status" value="1"/>
</dbReference>
<dbReference type="CDD" id="cd03702">
    <property type="entry name" value="IF2_mtIF2_II"/>
    <property type="match status" value="1"/>
</dbReference>
<dbReference type="CDD" id="cd03692">
    <property type="entry name" value="mtIF2_IVc"/>
    <property type="match status" value="1"/>
</dbReference>
<dbReference type="FunFam" id="2.40.30.10:FF:000008">
    <property type="entry name" value="Translation initiation factor IF-2"/>
    <property type="match status" value="1"/>
</dbReference>
<dbReference type="FunFam" id="2.40.30.10:FF:000054">
    <property type="entry name" value="Translation initiation factor IF-2"/>
    <property type="match status" value="1"/>
</dbReference>
<dbReference type="FunFam" id="3.40.50.10050:FF:000001">
    <property type="entry name" value="Translation initiation factor IF-2"/>
    <property type="match status" value="1"/>
</dbReference>
<dbReference type="FunFam" id="3.40.50.300:FF:000019">
    <property type="entry name" value="Translation initiation factor IF-2"/>
    <property type="match status" value="1"/>
</dbReference>
<dbReference type="Gene3D" id="3.40.50.300">
    <property type="entry name" value="P-loop containing nucleotide triphosphate hydrolases"/>
    <property type="match status" value="1"/>
</dbReference>
<dbReference type="Gene3D" id="2.40.30.10">
    <property type="entry name" value="Translation factors"/>
    <property type="match status" value="2"/>
</dbReference>
<dbReference type="Gene3D" id="3.40.50.10050">
    <property type="entry name" value="Translation initiation factor IF- 2, domain 3"/>
    <property type="match status" value="1"/>
</dbReference>
<dbReference type="HAMAP" id="MF_00100_B">
    <property type="entry name" value="IF_2_B"/>
    <property type="match status" value="1"/>
</dbReference>
<dbReference type="InterPro" id="IPR053905">
    <property type="entry name" value="EF-G-like_DII"/>
</dbReference>
<dbReference type="InterPro" id="IPR044145">
    <property type="entry name" value="IF2_II"/>
</dbReference>
<dbReference type="InterPro" id="IPR006847">
    <property type="entry name" value="IF2_N"/>
</dbReference>
<dbReference type="InterPro" id="IPR027417">
    <property type="entry name" value="P-loop_NTPase"/>
</dbReference>
<dbReference type="InterPro" id="IPR005225">
    <property type="entry name" value="Small_GTP-bd"/>
</dbReference>
<dbReference type="InterPro" id="IPR000795">
    <property type="entry name" value="T_Tr_GTP-bd_dom"/>
</dbReference>
<dbReference type="InterPro" id="IPR000178">
    <property type="entry name" value="TF_IF2_bacterial-like"/>
</dbReference>
<dbReference type="InterPro" id="IPR015760">
    <property type="entry name" value="TIF_IF2"/>
</dbReference>
<dbReference type="InterPro" id="IPR023115">
    <property type="entry name" value="TIF_IF2_dom3"/>
</dbReference>
<dbReference type="InterPro" id="IPR036925">
    <property type="entry name" value="TIF_IF2_dom3_sf"/>
</dbReference>
<dbReference type="InterPro" id="IPR009000">
    <property type="entry name" value="Transl_B-barrel_sf"/>
</dbReference>
<dbReference type="NCBIfam" id="TIGR00487">
    <property type="entry name" value="IF-2"/>
    <property type="match status" value="1"/>
</dbReference>
<dbReference type="NCBIfam" id="TIGR00231">
    <property type="entry name" value="small_GTP"/>
    <property type="match status" value="1"/>
</dbReference>
<dbReference type="PANTHER" id="PTHR43381:SF5">
    <property type="entry name" value="TR-TYPE G DOMAIN-CONTAINING PROTEIN"/>
    <property type="match status" value="1"/>
</dbReference>
<dbReference type="PANTHER" id="PTHR43381">
    <property type="entry name" value="TRANSLATION INITIATION FACTOR IF-2-RELATED"/>
    <property type="match status" value="1"/>
</dbReference>
<dbReference type="Pfam" id="PF22042">
    <property type="entry name" value="EF-G_D2"/>
    <property type="match status" value="1"/>
</dbReference>
<dbReference type="Pfam" id="PF00009">
    <property type="entry name" value="GTP_EFTU"/>
    <property type="match status" value="1"/>
</dbReference>
<dbReference type="Pfam" id="PF11987">
    <property type="entry name" value="IF-2"/>
    <property type="match status" value="1"/>
</dbReference>
<dbReference type="Pfam" id="PF04760">
    <property type="entry name" value="IF2_N"/>
    <property type="match status" value="1"/>
</dbReference>
<dbReference type="SUPFAM" id="SSF52156">
    <property type="entry name" value="Initiation factor IF2/eIF5b, domain 3"/>
    <property type="match status" value="1"/>
</dbReference>
<dbReference type="SUPFAM" id="SSF52540">
    <property type="entry name" value="P-loop containing nucleoside triphosphate hydrolases"/>
    <property type="match status" value="1"/>
</dbReference>
<dbReference type="SUPFAM" id="SSF50447">
    <property type="entry name" value="Translation proteins"/>
    <property type="match status" value="2"/>
</dbReference>
<dbReference type="PROSITE" id="PS51722">
    <property type="entry name" value="G_TR_2"/>
    <property type="match status" value="1"/>
</dbReference>
<dbReference type="PROSITE" id="PS01176">
    <property type="entry name" value="IF2"/>
    <property type="match status" value="1"/>
</dbReference>
<gene>
    <name evidence="2" type="primary">infB</name>
    <name type="ordered locus">HPSH_02080</name>
</gene>